<reference evidence="4" key="1">
    <citation type="journal article" date="2007" name="Nat. Biotechnol.">
        <title>Genome sequencing and analysis of the versatile cell factory Aspergillus niger CBS 513.88.</title>
        <authorList>
            <person name="Pel H.J."/>
            <person name="de Winde J.H."/>
            <person name="Archer D.B."/>
            <person name="Dyer P.S."/>
            <person name="Hofmann G."/>
            <person name="Schaap P.J."/>
            <person name="Turner G."/>
            <person name="de Vries R.P."/>
            <person name="Albang R."/>
            <person name="Albermann K."/>
            <person name="Andersen M.R."/>
            <person name="Bendtsen J.D."/>
            <person name="Benen J.A.E."/>
            <person name="van den Berg M."/>
            <person name="Breestraat S."/>
            <person name="Caddick M.X."/>
            <person name="Contreras R."/>
            <person name="Cornell M."/>
            <person name="Coutinho P.M."/>
            <person name="Danchin E.G.J."/>
            <person name="Debets A.J.M."/>
            <person name="Dekker P."/>
            <person name="van Dijck P.W.M."/>
            <person name="van Dijk A."/>
            <person name="Dijkhuizen L."/>
            <person name="Driessen A.J.M."/>
            <person name="d'Enfert C."/>
            <person name="Geysens S."/>
            <person name="Goosen C."/>
            <person name="Groot G.S.P."/>
            <person name="de Groot P.W.J."/>
            <person name="Guillemette T."/>
            <person name="Henrissat B."/>
            <person name="Herweijer M."/>
            <person name="van den Hombergh J.P.T.W."/>
            <person name="van den Hondel C.A.M.J.J."/>
            <person name="van der Heijden R.T.J.M."/>
            <person name="van der Kaaij R.M."/>
            <person name="Klis F.M."/>
            <person name="Kools H.J."/>
            <person name="Kubicek C.P."/>
            <person name="van Kuyk P.A."/>
            <person name="Lauber J."/>
            <person name="Lu X."/>
            <person name="van der Maarel M.J.E.C."/>
            <person name="Meulenberg R."/>
            <person name="Menke H."/>
            <person name="Mortimer M.A."/>
            <person name="Nielsen J."/>
            <person name="Oliver S.G."/>
            <person name="Olsthoorn M."/>
            <person name="Pal K."/>
            <person name="van Peij N.N.M.E."/>
            <person name="Ram A.F.J."/>
            <person name="Rinas U."/>
            <person name="Roubos J.A."/>
            <person name="Sagt C.M.J."/>
            <person name="Schmoll M."/>
            <person name="Sun J."/>
            <person name="Ussery D."/>
            <person name="Varga J."/>
            <person name="Vervecken W."/>
            <person name="van de Vondervoort P.J.J."/>
            <person name="Wedler H."/>
            <person name="Woesten H.A.B."/>
            <person name="Zeng A.-P."/>
            <person name="van Ooyen A.J.J."/>
            <person name="Visser J."/>
            <person name="Stam H."/>
        </authorList>
    </citation>
    <scope>NUCLEOTIDE SEQUENCE [LARGE SCALE GENOMIC DNA]</scope>
    <source>
        <strain>ATCC MYA-4892 / CBS 513.88 / FGSC A1513</strain>
    </source>
</reference>
<evidence type="ECO:0000250" key="1">
    <source>
        <dbReference type="UniProtKB" id="P42945"/>
    </source>
</evidence>
<evidence type="ECO:0000255" key="2"/>
<evidence type="ECO:0000305" key="3"/>
<evidence type="ECO:0000312" key="4">
    <source>
        <dbReference type="EMBL" id="CAK96695.1"/>
    </source>
</evidence>
<protein>
    <recommendedName>
        <fullName>U3 small nucleolar RNA-associated protein 10</fullName>
    </recommendedName>
</protein>
<dbReference type="EMBL" id="AM270178">
    <property type="protein sequence ID" value="CAK96695.1"/>
    <property type="molecule type" value="Genomic_DNA"/>
</dbReference>
<dbReference type="RefSeq" id="XP_001393027.1">
    <property type="nucleotide sequence ID" value="XM_001392990.2"/>
</dbReference>
<dbReference type="SMR" id="A5AB61"/>
<dbReference type="EnsemblFungi" id="CAK96695">
    <property type="protein sequence ID" value="CAK96695"/>
    <property type="gene ID" value="An08g09160"/>
</dbReference>
<dbReference type="GeneID" id="4983234"/>
<dbReference type="KEGG" id="ang:An08g09160"/>
<dbReference type="VEuPathDB" id="FungiDB:An08g09160"/>
<dbReference type="HOGENOM" id="CLU_001128_3_1_1"/>
<dbReference type="Proteomes" id="UP000006706">
    <property type="component" value="Chromosome 8R"/>
</dbReference>
<dbReference type="GO" id="GO:0030686">
    <property type="term" value="C:90S preribosome"/>
    <property type="evidence" value="ECO:0007669"/>
    <property type="project" value="TreeGrafter"/>
</dbReference>
<dbReference type="GO" id="GO:0016020">
    <property type="term" value="C:membrane"/>
    <property type="evidence" value="ECO:0007669"/>
    <property type="project" value="UniProtKB-SubCell"/>
</dbReference>
<dbReference type="GO" id="GO:0032040">
    <property type="term" value="C:small-subunit processome"/>
    <property type="evidence" value="ECO:0007669"/>
    <property type="project" value="TreeGrafter"/>
</dbReference>
<dbReference type="GO" id="GO:0034455">
    <property type="term" value="C:t-UTP complex"/>
    <property type="evidence" value="ECO:0007669"/>
    <property type="project" value="TreeGrafter"/>
</dbReference>
<dbReference type="GO" id="GO:0030515">
    <property type="term" value="F:snoRNA binding"/>
    <property type="evidence" value="ECO:0007669"/>
    <property type="project" value="TreeGrafter"/>
</dbReference>
<dbReference type="GO" id="GO:0000462">
    <property type="term" value="P:maturation of SSU-rRNA from tricistronic rRNA transcript (SSU-rRNA, 5.8S rRNA, LSU-rRNA)"/>
    <property type="evidence" value="ECO:0007669"/>
    <property type="project" value="TreeGrafter"/>
</dbReference>
<dbReference type="GO" id="GO:0045943">
    <property type="term" value="P:positive regulation of transcription by RNA polymerase I"/>
    <property type="evidence" value="ECO:0007669"/>
    <property type="project" value="TreeGrafter"/>
</dbReference>
<dbReference type="Gene3D" id="1.25.10.10">
    <property type="entry name" value="Leucine-rich Repeat Variant"/>
    <property type="match status" value="3"/>
</dbReference>
<dbReference type="InterPro" id="IPR011989">
    <property type="entry name" value="ARM-like"/>
</dbReference>
<dbReference type="InterPro" id="IPR016024">
    <property type="entry name" value="ARM-type_fold"/>
</dbReference>
<dbReference type="InterPro" id="IPR012954">
    <property type="entry name" value="BP28_C_dom"/>
</dbReference>
<dbReference type="InterPro" id="IPR021133">
    <property type="entry name" value="HEAT_type_2"/>
</dbReference>
<dbReference type="InterPro" id="IPR056473">
    <property type="entry name" value="HEAT_Utp10/HEAT1"/>
</dbReference>
<dbReference type="InterPro" id="IPR022125">
    <property type="entry name" value="U3snoRNP10_N"/>
</dbReference>
<dbReference type="InterPro" id="IPR040191">
    <property type="entry name" value="UTP10"/>
</dbReference>
<dbReference type="PANTHER" id="PTHR13457">
    <property type="entry name" value="BAP28"/>
    <property type="match status" value="1"/>
</dbReference>
<dbReference type="PANTHER" id="PTHR13457:SF1">
    <property type="entry name" value="HEAT REPEAT-CONTAINING PROTEIN 1"/>
    <property type="match status" value="1"/>
</dbReference>
<dbReference type="Pfam" id="PF08146">
    <property type="entry name" value="BP28CT"/>
    <property type="match status" value="1"/>
</dbReference>
<dbReference type="Pfam" id="PF23243">
    <property type="entry name" value="HEAT_HEATR1"/>
    <property type="match status" value="1"/>
</dbReference>
<dbReference type="Pfam" id="PF12397">
    <property type="entry name" value="U3snoRNP10"/>
    <property type="match status" value="1"/>
</dbReference>
<dbReference type="SMART" id="SM01036">
    <property type="entry name" value="BP28CT"/>
    <property type="match status" value="1"/>
</dbReference>
<dbReference type="SUPFAM" id="SSF48371">
    <property type="entry name" value="ARM repeat"/>
    <property type="match status" value="2"/>
</dbReference>
<dbReference type="PROSITE" id="PS50077">
    <property type="entry name" value="HEAT_REPEAT"/>
    <property type="match status" value="2"/>
</dbReference>
<gene>
    <name evidence="1" type="primary">utp10</name>
    <name type="ORF">An08g09160</name>
</gene>
<keyword id="KW-0472">Membrane</keyword>
<keyword id="KW-0539">Nucleus</keyword>
<keyword id="KW-1185">Reference proteome</keyword>
<keyword id="KW-0677">Repeat</keyword>
<keyword id="KW-0687">Ribonucleoprotein</keyword>
<keyword id="KW-0690">Ribosome biogenesis</keyword>
<keyword id="KW-0698">rRNA processing</keyword>
<keyword id="KW-0812">Transmembrane</keyword>
<keyword id="KW-1133">Transmembrane helix</keyword>
<accession>A5AB61</accession>
<name>UTP10_ASPNC</name>
<feature type="chain" id="PRO_0000308495" description="U3 small nucleolar RNA-associated protein 10">
    <location>
        <begin position="1"/>
        <end position="1800"/>
    </location>
</feature>
<feature type="transmembrane region" description="Helical" evidence="2">
    <location>
        <begin position="944"/>
        <end position="964"/>
    </location>
</feature>
<feature type="transmembrane region" description="Helical" evidence="2">
    <location>
        <begin position="1000"/>
        <end position="1020"/>
    </location>
</feature>
<feature type="repeat" description="HEAT 1" evidence="2">
    <location>
        <begin position="426"/>
        <end position="467"/>
    </location>
</feature>
<feature type="repeat" description="HEAT 2" evidence="2">
    <location>
        <begin position="581"/>
        <end position="619"/>
    </location>
</feature>
<feature type="repeat" description="HEAT 3" evidence="2">
    <location>
        <begin position="1043"/>
        <end position="1081"/>
    </location>
</feature>
<feature type="repeat" description="HEAT 4" evidence="2">
    <location>
        <begin position="1250"/>
        <end position="1288"/>
    </location>
</feature>
<feature type="repeat" description="HEAT 5" evidence="2">
    <location>
        <begin position="1294"/>
        <end position="1333"/>
    </location>
</feature>
<feature type="repeat" description="HEAT 6" evidence="2">
    <location>
        <begin position="1755"/>
        <end position="1793"/>
    </location>
</feature>
<comment type="function">
    <text evidence="1">Involved in nucleolar processing of pre-18S ribosomal RNA. Involved in ribosome biosynthesis (By similarity).</text>
</comment>
<comment type="subunit">
    <text evidence="1">Component of the ribosomal small subunit (SSU) processome.</text>
</comment>
<comment type="subcellular location">
    <subcellularLocation>
        <location evidence="1 2">Nucleus</location>
        <location evidence="1 2">Nucleolus</location>
    </subcellularLocation>
    <subcellularLocation>
        <location evidence="2">Membrane</location>
        <topology evidence="2">Multi-pass membrane protein</topology>
    </subcellularLocation>
</comment>
<comment type="similarity">
    <text evidence="3">Belongs to the HEATR1/UTP10 family.</text>
</comment>
<organism>
    <name type="scientific">Aspergillus niger (strain ATCC MYA-4892 / CBS 513.88 / FGSC A1513)</name>
    <dbReference type="NCBI Taxonomy" id="425011"/>
    <lineage>
        <taxon>Eukaryota</taxon>
        <taxon>Fungi</taxon>
        <taxon>Dikarya</taxon>
        <taxon>Ascomycota</taxon>
        <taxon>Pezizomycotina</taxon>
        <taxon>Eurotiomycetes</taxon>
        <taxon>Eurotiomycetidae</taxon>
        <taxon>Eurotiales</taxon>
        <taxon>Aspergillaceae</taxon>
        <taxon>Aspergillus</taxon>
        <taxon>Aspergillus subgen. Circumdati</taxon>
    </lineage>
</organism>
<proteinExistence type="inferred from homology"/>
<sequence>MASSLAAQLSQIAAKSTNQLNLKAQRIAHSQSLIFDWKTATTQDFDTVYQICFEGFQELCQLDPRFAPFERTIFSEQSKAEDRTEMNAAQNKELDTVVEAFLALVGGHLLLSPAVKAVDWLIRRFRVHEYNTEFTILTFLPYYTTPLFLNLLSILPEDLTPTFKILNPYKKSQINPPRHPLVHSATTNKHFLAAVNRYTLQVSKQRAHHHALLSFWAGTLTEAVAGMLDSSRSGRREVEKEKHEDVVMKVLPVLNDGLALKDVSELVIGCYMVCVVLAQKSSLQDKLLDGLMEAVAGSWTDETKESGLICLSVLAQKKSDARIPKRAFKAVLRLEDPVQQLSAISAQYPTSHLLLGLVAGCVDDLSKQKDLSRLDLLSLLFETNLLGEQEAGKAMAVILQAVSHAHTEGVLSLDAQTHLAELVQHFTQSESLQPIFQKTIEDSSIDVAALEHNLQTVIESVPTTTPAIGDVEMEDVQQEAVEDNFASVLESVAGKNLESSALSAQSMPAYESLVQTFALAVGSQEKLQAFVDLPALKKADASTSPQYLSFFIRTFSGSYPIGTRITALNQISSLLNSATPDVDLQALLPFLLVALADSSERVRREAAGVLAAIGSLYKKSKKGDANVWARDTIYGKQSKNVQWIAGRDVQKIVERAFLPGLEEYVLDQAHIGRVLEATLRGSSTSDSGATELKKPLRLSLFTFLCSHAVQMPLYAPKLSLLKLLNRVDKAGGTTRTKELGPFLKTWRDMKEHTAKDVCERERVSVADVDREAVMTVTPKDKDAISLLLSNVSPYSDSLRPSFVTAIFNRMKAVWGTVAEELQVDAAEKLFEISLEDVQTPLVHGCRDVLRSVQLTGSVLLQFLRKIPVSITDMESLGPAPKRRRTSQNNMVAMTIKDEAKLSQLMEKMTFILELVDSSTPEAHPELADGLFQTLAALHHFKSQIQSGLSYLLSLTLGSLLAIVNRSKGTAKAQFDTSVIRADLVVDCVRTTDSPQVQNAALLLVAGLSVIAPELVLHSVMPIFTFMGSSVLRKDDEYSVSVIDQTIDQVVPALIQSLRNQKRDVVSGTSELLLSFTAAFEHIPSHRRLRLFHALVTKLGTQDFLFAVLAMLANRYALDKDVLILMTGLVSDASAPVELNTYSKFLDLVKDSLSSKPGISQVLLGIGSDDGRDPQKVAVDLLRALAYLFKHSSLKVKMAKDFATEGDKVVGQIRTLFSRILEQVLAIGESMQNVKPVSQASGDVLSALFGTLSLVDFLDTIEVLLQRRNDELRRKVLRLLEGRLRQNPERDGASQHRMLDFLPTLVNIIQSSPDILLKHAAVACIDRIAEKYGRKEPTKVIHAAQVVASEACIGQDDERIRIMGVLCLASMAEVLGEAMIPALPDALSRSLALLEQSLEDGKENARLHDAVYSFFSALFIHIPFMVSGSHLDKILVLSYKSAVSEGVEDESREEALQLMARKVDVAATYAAIDRNWQHAVKAGPDATRETLGVVSLAIEKHPKSATVKNIAVLTSILFKAFDLRREQVSLDTQATFELSDVDEIEDIINEVTIKMIYKLNDTTFRPIFTKLLEWATTGVPKKDARGSLARLTTFYRFLQVFFGTLQSIVTGYSSYIIENVVSVLGKANPSNQDTKSLWLATMRMLKNSFEHDQDEFWQSPSHLTVIAQPLISQLAHAKNSSTASIVIAEAVPALTELAVAADSTDNHKELNTVLMRLLRPSAGPSGKTAGGENPHTRLAALKAQQSLTEQLGEEWLALLPEMLPYISELMEDEDENVEREVRKWVKQIEDVLGERLDDMLT</sequence>